<sequence length="117" mass="12848">MKHLWFFLLLVAAPRWVLSQVQLQESGPGLVKPSGTLSLTCAVSGGSISSSNWWSWVRQPPGKGLEWIGEIYHSGSTNYNPSLKSRVTISVDKSKNQFSLKLSSVTAADTAVYYCAR</sequence>
<organism>
    <name type="scientific">Homo sapiens</name>
    <name type="common">Human</name>
    <dbReference type="NCBI Taxonomy" id="9606"/>
    <lineage>
        <taxon>Eukaryota</taxon>
        <taxon>Metazoa</taxon>
        <taxon>Chordata</taxon>
        <taxon>Craniata</taxon>
        <taxon>Vertebrata</taxon>
        <taxon>Euteleostomi</taxon>
        <taxon>Mammalia</taxon>
        <taxon>Eutheria</taxon>
        <taxon>Euarchontoglires</taxon>
        <taxon>Primates</taxon>
        <taxon>Haplorrhini</taxon>
        <taxon>Catarrhini</taxon>
        <taxon>Hominidae</taxon>
        <taxon>Homo</taxon>
    </lineage>
</organism>
<protein>
    <recommendedName>
        <fullName evidence="4 9">Immunoglobulin heavy variable 4-4</fullName>
    </recommendedName>
</protein>
<keyword id="KW-1064">Adaptive immunity</keyword>
<keyword id="KW-1003">Cell membrane</keyword>
<keyword id="KW-1015">Disulfide bond</keyword>
<keyword id="KW-0391">Immunity</keyword>
<keyword id="KW-1280">Immunoglobulin</keyword>
<keyword id="KW-0393">Immunoglobulin domain</keyword>
<keyword id="KW-0472">Membrane</keyword>
<keyword id="KW-1267">Proteomics identification</keyword>
<keyword id="KW-1185">Reference proteome</keyword>
<keyword id="KW-0964">Secreted</keyword>
<keyword id="KW-0732">Signal</keyword>
<evidence type="ECO:0000250" key="1">
    <source>
        <dbReference type="UniProtKB" id="P23083"/>
    </source>
</evidence>
<evidence type="ECO:0000255" key="2"/>
<evidence type="ECO:0000255" key="3">
    <source>
        <dbReference type="PROSITE-ProRule" id="PRU00114"/>
    </source>
</evidence>
<evidence type="ECO:0000303" key="4">
    <source>
    </source>
</evidence>
<evidence type="ECO:0000303" key="5">
    <source>
    </source>
</evidence>
<evidence type="ECO:0000303" key="6">
    <source>
    </source>
</evidence>
<evidence type="ECO:0000303" key="7">
    <source>
    </source>
</evidence>
<evidence type="ECO:0000303" key="8">
    <source>
    </source>
</evidence>
<evidence type="ECO:0000303" key="9">
    <source ref="3"/>
</evidence>
<evidence type="ECO:0000305" key="10"/>
<reference key="1">
    <citation type="journal article" date="2003" name="Nature">
        <title>The DNA sequence and analysis of human chromosome 14.</title>
        <authorList>
            <person name="Heilig R."/>
            <person name="Eckenberg R."/>
            <person name="Petit J.-L."/>
            <person name="Fonknechten N."/>
            <person name="Da Silva C."/>
            <person name="Cattolico L."/>
            <person name="Levy M."/>
            <person name="Barbe V."/>
            <person name="De Berardinis V."/>
            <person name="Ureta-Vidal A."/>
            <person name="Pelletier E."/>
            <person name="Vico V."/>
            <person name="Anthouard V."/>
            <person name="Rowen L."/>
            <person name="Madan A."/>
            <person name="Qin S."/>
            <person name="Sun H."/>
            <person name="Du H."/>
            <person name="Pepin K."/>
            <person name="Artiguenave F."/>
            <person name="Robert C."/>
            <person name="Cruaud C."/>
            <person name="Bruels T."/>
            <person name="Jaillon O."/>
            <person name="Friedlander L."/>
            <person name="Samson G."/>
            <person name="Brottier P."/>
            <person name="Cure S."/>
            <person name="Segurens B."/>
            <person name="Aniere F."/>
            <person name="Samain S."/>
            <person name="Crespeau H."/>
            <person name="Abbasi N."/>
            <person name="Aiach N."/>
            <person name="Boscus D."/>
            <person name="Dickhoff R."/>
            <person name="Dors M."/>
            <person name="Dubois I."/>
            <person name="Friedman C."/>
            <person name="Gouyvenoux M."/>
            <person name="James R."/>
            <person name="Madan A."/>
            <person name="Mairey-Estrada B."/>
            <person name="Mangenot S."/>
            <person name="Martins N."/>
            <person name="Menard M."/>
            <person name="Oztas S."/>
            <person name="Ratcliffe A."/>
            <person name="Shaffer T."/>
            <person name="Trask B."/>
            <person name="Vacherie B."/>
            <person name="Bellemere C."/>
            <person name="Belser C."/>
            <person name="Besnard-Gonnet M."/>
            <person name="Bartol-Mavel D."/>
            <person name="Boutard M."/>
            <person name="Briez-Silla S."/>
            <person name="Combette S."/>
            <person name="Dufosse-Laurent V."/>
            <person name="Ferron C."/>
            <person name="Lechaplais C."/>
            <person name="Louesse C."/>
            <person name="Muselet D."/>
            <person name="Magdelenat G."/>
            <person name="Pateau E."/>
            <person name="Petit E."/>
            <person name="Sirvain-Trukniewicz P."/>
            <person name="Trybou A."/>
            <person name="Vega-Czarny N."/>
            <person name="Bataille E."/>
            <person name="Bluet E."/>
            <person name="Bordelais I."/>
            <person name="Dubois M."/>
            <person name="Dumont C."/>
            <person name="Guerin T."/>
            <person name="Haffray S."/>
            <person name="Hammadi R."/>
            <person name="Muanga J."/>
            <person name="Pellouin V."/>
            <person name="Robert D."/>
            <person name="Wunderle E."/>
            <person name="Gauguet G."/>
            <person name="Roy A."/>
            <person name="Sainte-Marthe L."/>
            <person name="Verdier J."/>
            <person name="Verdier-Discala C."/>
            <person name="Hillier L.W."/>
            <person name="Fulton L."/>
            <person name="McPherson J."/>
            <person name="Matsuda F."/>
            <person name="Wilson R."/>
            <person name="Scarpelli C."/>
            <person name="Gyapay G."/>
            <person name="Wincker P."/>
            <person name="Saurin W."/>
            <person name="Quetier F."/>
            <person name="Waterston R."/>
            <person name="Hood L."/>
            <person name="Weissenbach J."/>
        </authorList>
    </citation>
    <scope>NUCLEOTIDE SEQUENCE [LARGE SCALE GENOMIC DNA] (IMGT ALLELE IGHV4-4*02)</scope>
</reference>
<reference key="2">
    <citation type="journal article" date="2001" name="Exp. Clin. Immunogenet.">
        <title>Nomenclature of the human immunoglobulin heavy (IGH) genes.</title>
        <authorList>
            <person name="Lefranc M.P."/>
        </authorList>
    </citation>
    <scope>NOMENCLATURE</scope>
</reference>
<reference key="3">
    <citation type="book" date="2001" name="The Immunoglobulin FactsBook.">
        <title>The Immunoglobulin FactsBook.</title>
        <editorList>
            <person name="Lefranc M.P."/>
            <person name="Lefranc G."/>
        </editorList>
        <authorList>
            <person name="Lefranc M.P."/>
            <person name="Lefranc G."/>
        </authorList>
    </citation>
    <scope>NOMENCLATURE</scope>
</reference>
<reference key="4">
    <citation type="journal article" date="2007" name="Annu. Rev. Genet.">
        <title>Immunoglobulin somatic hypermutation.</title>
        <authorList>
            <person name="Teng G."/>
            <person name="Papavasiliou F.N."/>
        </authorList>
    </citation>
    <scope>REVIEW ON SOMATIC HYPERMUTATION</scope>
</reference>
<reference key="5">
    <citation type="journal article" date="2010" name="J. Allergy Clin. Immunol.">
        <title>Structure and function of immunoglobulins.</title>
        <authorList>
            <person name="Schroeder H.W. Jr."/>
            <person name="Cavacini L."/>
        </authorList>
    </citation>
    <scope>REVIEW ON IMMUNOGLOBULINS</scope>
</reference>
<reference key="6">
    <citation type="journal article" date="2012" name="Nat. Rev. Immunol.">
        <title>Molecular programming of B cell memory.</title>
        <authorList>
            <person name="McHeyzer-Williams M."/>
            <person name="Okitsu S."/>
            <person name="Wang N."/>
            <person name="McHeyzer-Williams L."/>
        </authorList>
    </citation>
    <scope>REVIEW ON FUNCTION</scope>
</reference>
<reference key="7">
    <citation type="journal article" date="2014" name="Front. Immunol.">
        <title>Immunoglobulin and T Cell Receptor Genes: IMGT((R)) and the Birth and Rise of Immunoinformatics.</title>
        <authorList>
            <person name="Lefranc M.P."/>
        </authorList>
    </citation>
    <scope>NOMENCLATURE</scope>
</reference>
<proteinExistence type="evidence at protein level"/>
<comment type="function">
    <text evidence="5 6 7 8">V region of the variable domain of immunoglobulin heavy chains that participates in the antigen recognition (PubMed:24600447). Immunoglobulins, also known as antibodies, are membrane-bound or secreted glycoproteins produced by B lymphocytes. In the recognition phase of humoral immunity, the membrane-bound immunoglobulins serve as receptors which, upon binding of a specific antigen, trigger the clonal expansion and differentiation of B lymphocytes into immunoglobulins-secreting plasma cells. Secreted immunoglobulins mediate the effector phase of humoral immunity, which results in the elimination of bound antigens (PubMed:20176268, PubMed:22158414). The antigen binding site is formed by the variable domain of one heavy chain, together with that of its associated light chain. Thus, each immunoglobulin has two antigen binding sites with remarkable affinity for a particular antigen. The variable domains are assembled by a process called V-(D)-J rearrangement and can then be subjected to somatic hypermutations which, after exposure to antigen and selection, allow affinity maturation for a particular antigen (PubMed:17576170, PubMed:20176268).</text>
</comment>
<comment type="subunit">
    <text evidence="6">Immunoglobulins are composed of two identical heavy chains and two identical light chains; disulfide-linked.</text>
</comment>
<comment type="subcellular location">
    <subcellularLocation>
        <location evidence="6 7">Secreted</location>
    </subcellularLocation>
    <subcellularLocation>
        <location evidence="6 7">Cell membrane</location>
    </subcellularLocation>
</comment>
<comment type="polymorphism">
    <text evidence="10">There are several alleles. The sequence shown is that of IMGT allele IGHV4-4*02.</text>
</comment>
<comment type="caution">
    <text evidence="10">For examples of full-length immunoglobulin heavy chains (of different isotypes) see AC P0DOX2, AC P0DOX3, AC P0DOX4, AC P0DOX5 and AC P0DOX6.</text>
</comment>
<dbReference type="EMBL" id="AC244226">
    <property type="status" value="NOT_ANNOTATED_CDS"/>
    <property type="molecule type" value="Genomic_DNA"/>
</dbReference>
<dbReference type="SMR" id="A0A075B6R2"/>
<dbReference type="FunCoup" id="A0A075B6R2">
    <property type="interactions" value="331"/>
</dbReference>
<dbReference type="IMGT_GENE-DB" id="IGHV4-4"/>
<dbReference type="BioMuta" id="IGHV4-4"/>
<dbReference type="MassIVE" id="A0A075B6R2"/>
<dbReference type="Ensembl" id="ENST00000455737.2">
    <property type="protein sequence ID" value="ENSP00000410711.2"/>
    <property type="gene ID" value="ENSG00000276775.1"/>
</dbReference>
<dbReference type="Ensembl" id="ENST00000631379.1">
    <property type="protein sequence ID" value="ENSP00000487977.1"/>
    <property type="gene ID" value="ENSG00000282223.1"/>
</dbReference>
<dbReference type="UCSC" id="uc059gfp.1">
    <property type="organism name" value="human"/>
</dbReference>
<dbReference type="AGR" id="HGNC:5652"/>
<dbReference type="GeneCards" id="IGHV4-4"/>
<dbReference type="HGNC" id="HGNC:5652">
    <property type="gene designation" value="IGHV4-4"/>
</dbReference>
<dbReference type="HPA" id="ENSG00000276775">
    <property type="expression patterns" value="Tissue enhanced (lymphoid tissue, urinary bladder)"/>
</dbReference>
<dbReference type="neXtProt" id="NX_A0A075B6R2"/>
<dbReference type="OpenTargets" id="ENSG00000276775"/>
<dbReference type="VEuPathDB" id="HostDB:ENSG00000276775"/>
<dbReference type="GeneTree" id="ENSGT01030000234536"/>
<dbReference type="HOGENOM" id="CLU_077975_5_0_1"/>
<dbReference type="InParanoid" id="A0A075B6R2"/>
<dbReference type="OMA" id="CSTKERI"/>
<dbReference type="PAN-GO" id="A0A075B6R2">
    <property type="GO annotations" value="11 GO annotations based on evolutionary models"/>
</dbReference>
<dbReference type="ChiTaRS" id="IGHV4-4">
    <property type="organism name" value="human"/>
</dbReference>
<dbReference type="Pharos" id="A0A075B6R2">
    <property type="development level" value="Tdark"/>
</dbReference>
<dbReference type="PRO" id="PR:A0A075B6R2"/>
<dbReference type="Proteomes" id="UP000005640">
    <property type="component" value="Chromosome 14"/>
</dbReference>
<dbReference type="RNAct" id="A0A075B6R2">
    <property type="molecule type" value="protein"/>
</dbReference>
<dbReference type="Bgee" id="ENSG00000276775">
    <property type="expression patterns" value="Expressed in rectum and 90 other cell types or tissues"/>
</dbReference>
<dbReference type="GO" id="GO:0005576">
    <property type="term" value="C:extracellular region"/>
    <property type="evidence" value="ECO:0007669"/>
    <property type="project" value="UniProtKB-SubCell"/>
</dbReference>
<dbReference type="GO" id="GO:0019814">
    <property type="term" value="C:immunoglobulin complex"/>
    <property type="evidence" value="ECO:0007669"/>
    <property type="project" value="UniProtKB-KW"/>
</dbReference>
<dbReference type="GO" id="GO:0005886">
    <property type="term" value="C:plasma membrane"/>
    <property type="evidence" value="ECO:0007669"/>
    <property type="project" value="UniProtKB-SubCell"/>
</dbReference>
<dbReference type="GO" id="GO:0003823">
    <property type="term" value="F:antigen binding"/>
    <property type="evidence" value="ECO:0000318"/>
    <property type="project" value="GO_Central"/>
</dbReference>
<dbReference type="GO" id="GO:0016064">
    <property type="term" value="P:immunoglobulin mediated immune response"/>
    <property type="evidence" value="ECO:0000318"/>
    <property type="project" value="GO_Central"/>
</dbReference>
<dbReference type="FunFam" id="2.60.40.10:FF:001119">
    <property type="entry name" value="Immunoglobulin heavy variable 4-30-4"/>
    <property type="match status" value="1"/>
</dbReference>
<dbReference type="Gene3D" id="2.60.40.10">
    <property type="entry name" value="Immunoglobulins"/>
    <property type="match status" value="1"/>
</dbReference>
<dbReference type="InterPro" id="IPR007110">
    <property type="entry name" value="Ig-like_dom"/>
</dbReference>
<dbReference type="InterPro" id="IPR036179">
    <property type="entry name" value="Ig-like_dom_sf"/>
</dbReference>
<dbReference type="InterPro" id="IPR013783">
    <property type="entry name" value="Ig-like_fold"/>
</dbReference>
<dbReference type="InterPro" id="IPR013106">
    <property type="entry name" value="Ig_V-set"/>
</dbReference>
<dbReference type="InterPro" id="IPR050199">
    <property type="entry name" value="IgHV"/>
</dbReference>
<dbReference type="PANTHER" id="PTHR23266">
    <property type="entry name" value="IMMUNOGLOBULIN HEAVY CHAIN"/>
    <property type="match status" value="1"/>
</dbReference>
<dbReference type="Pfam" id="PF07686">
    <property type="entry name" value="V-set"/>
    <property type="match status" value="1"/>
</dbReference>
<dbReference type="SMART" id="SM00406">
    <property type="entry name" value="IGv"/>
    <property type="match status" value="1"/>
</dbReference>
<dbReference type="SUPFAM" id="SSF48726">
    <property type="entry name" value="Immunoglobulin"/>
    <property type="match status" value="1"/>
</dbReference>
<dbReference type="PROSITE" id="PS50835">
    <property type="entry name" value="IG_LIKE"/>
    <property type="match status" value="1"/>
</dbReference>
<accession>A0A075B6R2</accession>
<name>HV404_HUMAN</name>
<gene>
    <name evidence="4 9" type="primary">IGHV4-4</name>
</gene>
<feature type="signal peptide" evidence="2">
    <location>
        <begin position="1"/>
        <end position="19"/>
    </location>
</feature>
<feature type="chain" id="PRO_5007375748" description="Immunoglobulin heavy variable 4-4" evidence="2">
    <location>
        <begin position="20"/>
        <end position="117"/>
    </location>
</feature>
<feature type="domain" description="Ig-like" evidence="3">
    <location>
        <begin position="20"/>
        <end position="117" status="greater than"/>
    </location>
</feature>
<feature type="region of interest" description="Framework-1" evidence="1">
    <location>
        <begin position="20"/>
        <end position="44"/>
    </location>
</feature>
<feature type="region of interest" description="Complementarity-determining-1" evidence="1">
    <location>
        <begin position="45"/>
        <end position="53"/>
    </location>
</feature>
<feature type="region of interest" description="Framework-2" evidence="1">
    <location>
        <begin position="54"/>
        <end position="70"/>
    </location>
</feature>
<feature type="region of interest" description="Complementarity-determining-2" evidence="1">
    <location>
        <begin position="71"/>
        <end position="77"/>
    </location>
</feature>
<feature type="region of interest" description="Framework-3" evidence="1">
    <location>
        <begin position="78"/>
        <end position="115"/>
    </location>
</feature>
<feature type="region of interest" description="Complementarity-determining-3" evidence="1">
    <location>
        <begin position="116"/>
        <end position="117" status="greater than"/>
    </location>
</feature>
<feature type="disulfide bond" evidence="3">
    <location>
        <begin position="41"/>
        <end position="115"/>
    </location>
</feature>
<feature type="non-terminal residue">
    <location>
        <position position="117"/>
    </location>
</feature>